<comment type="function">
    <text>Could regulate proteolytic events associated with testicular germ cell maturation.</text>
</comment>
<comment type="interaction">
    <interactant intactId="EBI-7054564">
        <id>Q9Y6M0</id>
    </interactant>
    <interactant intactId="EBI-2371394">
        <id>P36952</id>
        <label>SERPINB5</label>
    </interactant>
    <organismsDiffer>false</organismsDiffer>
    <experiments>7</experiments>
</comment>
<comment type="subcellular location">
    <subcellularLocation>
        <location evidence="4">Cell membrane</location>
        <topology evidence="4">Lipid-anchor</topology>
        <topology evidence="4">GPI-anchor</topology>
    </subcellularLocation>
</comment>
<comment type="alternative products">
    <event type="alternative splicing"/>
    <isoform>
        <id>Q9Y6M0-1</id>
        <name>1</name>
        <name>L</name>
        <sequence type="displayed"/>
    </isoform>
    <isoform>
        <id>Q9Y6M0-2</id>
        <name>2</name>
        <name>S</name>
        <sequence type="described" ref="VSP_005389"/>
    </isoform>
    <isoform>
        <id>Q9Y6M0-3</id>
        <name>3</name>
        <sequence type="described" ref="VSP_005390"/>
    </isoform>
</comment>
<comment type="tissue specificity">
    <text>Expressed predominantly in premeiotic testicular germ cells, mostly late pachytene and diplotene spermatocytes.</text>
</comment>
<comment type="similarity">
    <text evidence="2">Belongs to the peptidase S1 family.</text>
</comment>
<accession>Q9Y6M0</accession>
<accession>Q9NS34</accession>
<accession>Q9P2V6</accession>
<gene>
    <name type="primary">PRSS21</name>
    <name type="synonym">ESP1</name>
    <name type="synonym">TEST1</name>
    <name type="ORF">UNQ266/PRO303</name>
</gene>
<name>TEST_HUMAN</name>
<feature type="signal peptide" evidence="1">
    <location>
        <begin position="1"/>
        <end position="19"/>
    </location>
</feature>
<feature type="propeptide" id="PRO_0000027849" evidence="1">
    <location>
        <begin position="20"/>
        <end position="41"/>
    </location>
</feature>
<feature type="chain" id="PRO_0000027850" description="Testisin">
    <location>
        <begin position="42"/>
        <end position="288"/>
    </location>
</feature>
<feature type="propeptide" id="PRO_0000027851" description="Removed in mature form" evidence="1">
    <location>
        <begin position="289"/>
        <end position="314"/>
    </location>
</feature>
<feature type="domain" description="Peptidase S1" evidence="2">
    <location>
        <begin position="42"/>
        <end position="286"/>
    </location>
</feature>
<feature type="active site" description="Charge relay system" evidence="1">
    <location>
        <position position="82"/>
    </location>
</feature>
<feature type="active site" description="Charge relay system" evidence="1">
    <location>
        <position position="137"/>
    </location>
</feature>
<feature type="active site" description="Charge relay system" evidence="1">
    <location>
        <position position="238"/>
    </location>
</feature>
<feature type="lipid moiety-binding region" description="GPI-anchor amidated serine" evidence="1">
    <location>
        <position position="288"/>
    </location>
</feature>
<feature type="glycosylation site" description="N-linked (GlcNAc...) asparagine" evidence="1">
    <location>
        <position position="167"/>
    </location>
</feature>
<feature type="glycosylation site" description="N-linked (GlcNAc...) asparagine" evidence="1">
    <location>
        <position position="200"/>
    </location>
</feature>
<feature type="glycosylation site" description="N-linked (GlcNAc...) asparagine" evidence="1">
    <location>
        <position position="273"/>
    </location>
</feature>
<feature type="disulfide bond" evidence="2">
    <location>
        <begin position="33"/>
        <end position="157"/>
    </location>
</feature>
<feature type="disulfide bond" evidence="2">
    <location>
        <begin position="67"/>
        <end position="83"/>
    </location>
</feature>
<feature type="disulfide bond" evidence="2">
    <location>
        <begin position="171"/>
        <end position="244"/>
    </location>
</feature>
<feature type="disulfide bond" evidence="2">
    <location>
        <begin position="204"/>
        <end position="223"/>
    </location>
</feature>
<feature type="disulfide bond" evidence="2">
    <location>
        <begin position="234"/>
        <end position="262"/>
    </location>
</feature>
<feature type="splice variant" id="VSP_005389" description="In isoform 2." evidence="4">
    <location>
        <begin position="87"/>
        <end position="88"/>
    </location>
</feature>
<feature type="splice variant" id="VSP_005390" description="In isoform 3." evidence="3">
    <location>
        <begin position="222"/>
        <end position="235"/>
    </location>
</feature>
<feature type="sequence variant" id="VAR_051840" description="In dbSNP:rs2072273.">
    <original>R</original>
    <variation>Q</variation>
    <location>
        <position position="264"/>
    </location>
</feature>
<evidence type="ECO:0000255" key="1"/>
<evidence type="ECO:0000255" key="2">
    <source>
        <dbReference type="PROSITE-ProRule" id="PRU00274"/>
    </source>
</evidence>
<evidence type="ECO:0000303" key="3">
    <source>
    </source>
</evidence>
<evidence type="ECO:0000305" key="4"/>
<dbReference type="EC" id="3.4.21.-"/>
<dbReference type="EMBL" id="AF058300">
    <property type="protein sequence ID" value="AAD41588.1"/>
    <property type="molecule type" value="mRNA"/>
</dbReference>
<dbReference type="EMBL" id="AB031329">
    <property type="protein sequence ID" value="BAA83520.1"/>
    <property type="molecule type" value="mRNA"/>
</dbReference>
<dbReference type="EMBL" id="AB031330">
    <property type="protein sequence ID" value="BAA83521.1"/>
    <property type="molecule type" value="mRNA"/>
</dbReference>
<dbReference type="EMBL" id="AB031331">
    <property type="protein sequence ID" value="BAA89532.1"/>
    <property type="molecule type" value="mRNA"/>
</dbReference>
<dbReference type="EMBL" id="AF058301">
    <property type="protein sequence ID" value="AAF79019.1"/>
    <property type="molecule type" value="Genomic_DNA"/>
</dbReference>
<dbReference type="EMBL" id="AF058301">
    <property type="protein sequence ID" value="AAF79020.1"/>
    <property type="molecule type" value="Genomic_DNA"/>
</dbReference>
<dbReference type="EMBL" id="AY359034">
    <property type="protein sequence ID" value="AAQ89393.1"/>
    <property type="molecule type" value="mRNA"/>
</dbReference>
<dbReference type="EMBL" id="BC074999">
    <property type="protein sequence ID" value="AAH74999.1"/>
    <property type="molecule type" value="mRNA"/>
</dbReference>
<dbReference type="EMBL" id="BC075000">
    <property type="protein sequence ID" value="AAH75000.1"/>
    <property type="molecule type" value="mRNA"/>
</dbReference>
<dbReference type="CCDS" id="CCDS10478.1">
    <molecule id="Q9Y6M0-1"/>
</dbReference>
<dbReference type="CCDS" id="CCDS45388.1">
    <molecule id="Q9Y6M0-3"/>
</dbReference>
<dbReference type="RefSeq" id="NP_001257381.1">
    <property type="nucleotide sequence ID" value="NM_001270452.1"/>
</dbReference>
<dbReference type="RefSeq" id="NP_006790.1">
    <molecule id="Q9Y6M0-1"/>
    <property type="nucleotide sequence ID" value="NM_006799.4"/>
</dbReference>
<dbReference type="RefSeq" id="NP_659205.1">
    <molecule id="Q9Y6M0-2"/>
    <property type="nucleotide sequence ID" value="NM_144956.3"/>
</dbReference>
<dbReference type="RefSeq" id="NP_659206.1">
    <molecule id="Q9Y6M0-3"/>
    <property type="nucleotide sequence ID" value="NM_144957.3"/>
</dbReference>
<dbReference type="SMR" id="Q9Y6M0"/>
<dbReference type="BioGRID" id="116142">
    <property type="interactions" value="66"/>
</dbReference>
<dbReference type="FunCoup" id="Q9Y6M0">
    <property type="interactions" value="340"/>
</dbReference>
<dbReference type="IntAct" id="Q9Y6M0">
    <property type="interactions" value="30"/>
</dbReference>
<dbReference type="MINT" id="Q9Y6M0"/>
<dbReference type="STRING" id="9606.ENSP00000005995"/>
<dbReference type="MEROPS" id="S01.011"/>
<dbReference type="GlyCosmos" id="Q9Y6M0">
    <property type="glycosylation" value="3 sites, No reported glycans"/>
</dbReference>
<dbReference type="GlyGen" id="Q9Y6M0">
    <property type="glycosylation" value="4 sites, 2 N-linked glycans (2 sites), 1 O-linked glycan (1 site)"/>
</dbReference>
<dbReference type="iPTMnet" id="Q9Y6M0"/>
<dbReference type="PhosphoSitePlus" id="Q9Y6M0"/>
<dbReference type="BioMuta" id="PRSS21"/>
<dbReference type="DMDM" id="13633973"/>
<dbReference type="jPOST" id="Q9Y6M0"/>
<dbReference type="MassIVE" id="Q9Y6M0"/>
<dbReference type="PaxDb" id="9606-ENSP00000005995"/>
<dbReference type="PeptideAtlas" id="Q9Y6M0"/>
<dbReference type="ProteomicsDB" id="86721">
    <molecule id="Q9Y6M0-1"/>
</dbReference>
<dbReference type="ProteomicsDB" id="86722">
    <molecule id="Q9Y6M0-2"/>
</dbReference>
<dbReference type="ProteomicsDB" id="86723">
    <molecule id="Q9Y6M0-3"/>
</dbReference>
<dbReference type="Pumba" id="Q9Y6M0"/>
<dbReference type="Antibodypedia" id="1701">
    <property type="antibodies" value="65 antibodies from 17 providers"/>
</dbReference>
<dbReference type="DNASU" id="10942"/>
<dbReference type="Ensembl" id="ENST00000005995.8">
    <molecule id="Q9Y6M0-1"/>
    <property type="protein sequence ID" value="ENSP00000005995.3"/>
    <property type="gene ID" value="ENSG00000007038.11"/>
</dbReference>
<dbReference type="Ensembl" id="ENST00000450020.7">
    <molecule id="Q9Y6M0-3"/>
    <property type="protein sequence ID" value="ENSP00000407741.3"/>
    <property type="gene ID" value="ENSG00000007038.11"/>
</dbReference>
<dbReference type="GeneID" id="10942"/>
<dbReference type="KEGG" id="hsa:10942"/>
<dbReference type="MANE-Select" id="ENST00000005995.8">
    <property type="protein sequence ID" value="ENSP00000005995.3"/>
    <property type="RefSeq nucleotide sequence ID" value="NM_006799.4"/>
    <property type="RefSeq protein sequence ID" value="NP_006790.1"/>
</dbReference>
<dbReference type="UCSC" id="uc002crr.5">
    <molecule id="Q9Y6M0-1"/>
    <property type="organism name" value="human"/>
</dbReference>
<dbReference type="AGR" id="HGNC:9485"/>
<dbReference type="CTD" id="10942"/>
<dbReference type="DisGeNET" id="10942"/>
<dbReference type="GeneCards" id="PRSS21"/>
<dbReference type="HGNC" id="HGNC:9485">
    <property type="gene designation" value="PRSS21"/>
</dbReference>
<dbReference type="HPA" id="ENSG00000007038">
    <property type="expression patterns" value="Tissue enriched (testis)"/>
</dbReference>
<dbReference type="MIM" id="608159">
    <property type="type" value="gene"/>
</dbReference>
<dbReference type="neXtProt" id="NX_Q9Y6M0"/>
<dbReference type="OpenTargets" id="ENSG00000007038"/>
<dbReference type="PharmGKB" id="PA33834"/>
<dbReference type="VEuPathDB" id="HostDB:ENSG00000007038"/>
<dbReference type="eggNOG" id="KOG3627">
    <property type="taxonomic scope" value="Eukaryota"/>
</dbReference>
<dbReference type="GeneTree" id="ENSGT00940000155138"/>
<dbReference type="HOGENOM" id="CLU_006842_0_4_1"/>
<dbReference type="InParanoid" id="Q9Y6M0"/>
<dbReference type="OMA" id="DAQGEKD"/>
<dbReference type="OrthoDB" id="10051896at2759"/>
<dbReference type="PAN-GO" id="Q9Y6M0">
    <property type="GO annotations" value="4 GO annotations based on evolutionary models"/>
</dbReference>
<dbReference type="PhylomeDB" id="Q9Y6M0"/>
<dbReference type="TreeFam" id="TF351676"/>
<dbReference type="PathwayCommons" id="Q9Y6M0"/>
<dbReference type="Reactome" id="R-HSA-163125">
    <property type="pathway name" value="Post-translational modification: synthesis of GPI-anchored proteins"/>
</dbReference>
<dbReference type="SignaLink" id="Q9Y6M0"/>
<dbReference type="SIGNOR" id="Q9Y6M0"/>
<dbReference type="BioGRID-ORCS" id="10942">
    <property type="hits" value="22 hits in 1152 CRISPR screens"/>
</dbReference>
<dbReference type="ChiTaRS" id="PRSS21">
    <property type="organism name" value="human"/>
</dbReference>
<dbReference type="GenomeRNAi" id="10942"/>
<dbReference type="Pharos" id="Q9Y6M0">
    <property type="development level" value="Tbio"/>
</dbReference>
<dbReference type="PRO" id="PR:Q9Y6M0"/>
<dbReference type="Proteomes" id="UP000005640">
    <property type="component" value="Chromosome 16"/>
</dbReference>
<dbReference type="RNAct" id="Q9Y6M0">
    <property type="molecule type" value="protein"/>
</dbReference>
<dbReference type="Bgee" id="ENSG00000007038">
    <property type="expression patterns" value="Expressed in right testis and 88 other cell types or tissues"/>
</dbReference>
<dbReference type="ExpressionAtlas" id="Q9Y6M0">
    <property type="expression patterns" value="baseline and differential"/>
</dbReference>
<dbReference type="GO" id="GO:0005737">
    <property type="term" value="C:cytoplasm"/>
    <property type="evidence" value="ECO:0000304"/>
    <property type="project" value="ProtInc"/>
</dbReference>
<dbReference type="GO" id="GO:0005576">
    <property type="term" value="C:extracellular region"/>
    <property type="evidence" value="ECO:0000304"/>
    <property type="project" value="Reactome"/>
</dbReference>
<dbReference type="GO" id="GO:0005615">
    <property type="term" value="C:extracellular space"/>
    <property type="evidence" value="ECO:0000318"/>
    <property type="project" value="GO_Central"/>
</dbReference>
<dbReference type="GO" id="GO:0016020">
    <property type="term" value="C:membrane"/>
    <property type="evidence" value="ECO:0000304"/>
    <property type="project" value="ProtInc"/>
</dbReference>
<dbReference type="GO" id="GO:0005886">
    <property type="term" value="C:plasma membrane"/>
    <property type="evidence" value="ECO:0000304"/>
    <property type="project" value="Reactome"/>
</dbReference>
<dbReference type="GO" id="GO:0098552">
    <property type="term" value="C:side of membrane"/>
    <property type="evidence" value="ECO:0007669"/>
    <property type="project" value="UniProtKB-KW"/>
</dbReference>
<dbReference type="GO" id="GO:0004252">
    <property type="term" value="F:serine-type endopeptidase activity"/>
    <property type="evidence" value="ECO:0000318"/>
    <property type="project" value="GO_Central"/>
</dbReference>
<dbReference type="GO" id="GO:0008236">
    <property type="term" value="F:serine-type peptidase activity"/>
    <property type="evidence" value="ECO:0000304"/>
    <property type="project" value="ProtInc"/>
</dbReference>
<dbReference type="GO" id="GO:0006508">
    <property type="term" value="P:proteolysis"/>
    <property type="evidence" value="ECO:0000318"/>
    <property type="project" value="GO_Central"/>
</dbReference>
<dbReference type="GO" id="GO:0007283">
    <property type="term" value="P:spermatogenesis"/>
    <property type="evidence" value="ECO:0000318"/>
    <property type="project" value="GO_Central"/>
</dbReference>
<dbReference type="CDD" id="cd00190">
    <property type="entry name" value="Tryp_SPc"/>
    <property type="match status" value="1"/>
</dbReference>
<dbReference type="FunFam" id="2.40.10.10:FF:000024">
    <property type="entry name" value="Serine protease 53"/>
    <property type="match status" value="1"/>
</dbReference>
<dbReference type="Gene3D" id="2.40.10.10">
    <property type="entry name" value="Trypsin-like serine proteases"/>
    <property type="match status" value="1"/>
</dbReference>
<dbReference type="InterPro" id="IPR009003">
    <property type="entry name" value="Peptidase_S1_PA"/>
</dbReference>
<dbReference type="InterPro" id="IPR043504">
    <property type="entry name" value="Peptidase_S1_PA_chymotrypsin"/>
</dbReference>
<dbReference type="InterPro" id="IPR001314">
    <property type="entry name" value="Peptidase_S1A"/>
</dbReference>
<dbReference type="InterPro" id="IPR001254">
    <property type="entry name" value="Trypsin_dom"/>
</dbReference>
<dbReference type="InterPro" id="IPR018114">
    <property type="entry name" value="TRYPSIN_HIS"/>
</dbReference>
<dbReference type="InterPro" id="IPR033116">
    <property type="entry name" value="TRYPSIN_SER"/>
</dbReference>
<dbReference type="PANTHER" id="PTHR24252">
    <property type="entry name" value="ACROSIN-RELATED"/>
    <property type="match status" value="1"/>
</dbReference>
<dbReference type="PANTHER" id="PTHR24252:SF17">
    <property type="entry name" value="SUPPRESSOR OF TUMORIGENICITY 14 PROTEIN HOMOLOG-RELATED"/>
    <property type="match status" value="1"/>
</dbReference>
<dbReference type="Pfam" id="PF00089">
    <property type="entry name" value="Trypsin"/>
    <property type="match status" value="1"/>
</dbReference>
<dbReference type="PRINTS" id="PR00722">
    <property type="entry name" value="CHYMOTRYPSIN"/>
</dbReference>
<dbReference type="SMART" id="SM00020">
    <property type="entry name" value="Tryp_SPc"/>
    <property type="match status" value="1"/>
</dbReference>
<dbReference type="SUPFAM" id="SSF50494">
    <property type="entry name" value="Trypsin-like serine proteases"/>
    <property type="match status" value="1"/>
</dbReference>
<dbReference type="PROSITE" id="PS50240">
    <property type="entry name" value="TRYPSIN_DOM"/>
    <property type="match status" value="1"/>
</dbReference>
<dbReference type="PROSITE" id="PS00134">
    <property type="entry name" value="TRYPSIN_HIS"/>
    <property type="match status" value="1"/>
</dbReference>
<dbReference type="PROSITE" id="PS00135">
    <property type="entry name" value="TRYPSIN_SER"/>
    <property type="match status" value="1"/>
</dbReference>
<proteinExistence type="evidence at protein level"/>
<protein>
    <recommendedName>
        <fullName>Testisin</fullName>
        <ecNumber>3.4.21.-</ecNumber>
    </recommendedName>
    <alternativeName>
        <fullName>Eosinophil serine protease 1</fullName>
        <shortName>ESP-1</shortName>
    </alternativeName>
    <alternativeName>
        <fullName>Serine protease 21</fullName>
    </alternativeName>
</protein>
<reference key="1">
    <citation type="journal article" date="1998" name="Biochem. Biophys. Res. Commun.">
        <title>Cloning and tissue distribution of a novel serine protease esp-1 from human eosinophils.</title>
        <authorList>
            <person name="Inoue M."/>
            <person name="Kanbe N."/>
            <person name="Kurosawa M."/>
            <person name="Kido H."/>
        </authorList>
    </citation>
    <scope>NUCLEOTIDE SEQUENCE (ISOFORM 1)</scope>
    <source>
        <tissue>Eosinophil</tissue>
    </source>
</reference>
<reference key="2">
    <citation type="journal article" date="1999" name="Biochem. Biophys. Res. Commun.">
        <title>Structural analysis of esp-1 gene (PRSS 21).</title>
        <authorList>
            <person name="Inoue M."/>
            <person name="Isobe M."/>
            <person name="Itoyama T."/>
            <person name="Kido H."/>
        </authorList>
    </citation>
    <scope>NUCLEOTIDE SEQUENCE [MRNA] (ISOFORM 3)</scope>
</reference>
<reference key="3">
    <citation type="journal article" date="1999" name="Cancer Res.">
        <title>Testisin, a new human serine proteinase expressed by premeiotic testicular germ cells and lost in testicular germ cell tumors.</title>
        <authorList>
            <person name="Hooper J.D."/>
            <person name="Nicol D.L."/>
            <person name="Dickinson J.L."/>
            <person name="Eyre H.J."/>
            <person name="Scarman A.L."/>
            <person name="Normyle J.F."/>
            <person name="Stuttgen M.A."/>
            <person name="Douglas M.L."/>
            <person name="Loveland K.A."/>
            <person name="Sutherland G.R."/>
            <person name="Antalis T.M."/>
        </authorList>
    </citation>
    <scope>NUCLEOTIDE SEQUENCE (ISOFORMS 1 AND 2)</scope>
    <source>
        <tissue>Cervix carcinoma</tissue>
    </source>
</reference>
<reference key="4">
    <citation type="journal article" date="2000" name="Biochim. Biophys. Acta">
        <title>Localization, expression and genomic structure of the gene encoding the human serine protease testisin.</title>
        <authorList>
            <person name="Hooper J.D."/>
            <person name="Bowen N."/>
            <person name="Marshall H."/>
            <person name="Cullen L.M."/>
            <person name="Sood R."/>
            <person name="Daniels R."/>
            <person name="Stuttgen M.A."/>
            <person name="Normyle J.F."/>
            <person name="Higgs D.R."/>
            <person name="Kastner D.L."/>
            <person name="Ogbourne S.M."/>
            <person name="Pera M.F."/>
            <person name="Jazwinska E.C."/>
            <person name="Antalis T.M."/>
        </authorList>
    </citation>
    <scope>NUCLEOTIDE SEQUENCE [GENOMIC DNA]</scope>
</reference>
<reference key="5">
    <citation type="journal article" date="2003" name="Genome Res.">
        <title>The secreted protein discovery initiative (SPDI), a large-scale effort to identify novel human secreted and transmembrane proteins: a bioinformatics assessment.</title>
        <authorList>
            <person name="Clark H.F."/>
            <person name="Gurney A.L."/>
            <person name="Abaya E."/>
            <person name="Baker K."/>
            <person name="Baldwin D.T."/>
            <person name="Brush J."/>
            <person name="Chen J."/>
            <person name="Chow B."/>
            <person name="Chui C."/>
            <person name="Crowley C."/>
            <person name="Currell B."/>
            <person name="Deuel B."/>
            <person name="Dowd P."/>
            <person name="Eaton D."/>
            <person name="Foster J.S."/>
            <person name="Grimaldi C."/>
            <person name="Gu Q."/>
            <person name="Hass P.E."/>
            <person name="Heldens S."/>
            <person name="Huang A."/>
            <person name="Kim H.S."/>
            <person name="Klimowski L."/>
            <person name="Jin Y."/>
            <person name="Johnson S."/>
            <person name="Lee J."/>
            <person name="Lewis L."/>
            <person name="Liao D."/>
            <person name="Mark M.R."/>
            <person name="Robbie E."/>
            <person name="Sanchez C."/>
            <person name="Schoenfeld J."/>
            <person name="Seshagiri S."/>
            <person name="Simmons L."/>
            <person name="Singh J."/>
            <person name="Smith V."/>
            <person name="Stinson J."/>
            <person name="Vagts A."/>
            <person name="Vandlen R.L."/>
            <person name="Watanabe C."/>
            <person name="Wieand D."/>
            <person name="Woods K."/>
            <person name="Xie M.-H."/>
            <person name="Yansura D.G."/>
            <person name="Yi S."/>
            <person name="Yu G."/>
            <person name="Yuan J."/>
            <person name="Zhang M."/>
            <person name="Zhang Z."/>
            <person name="Goddard A.D."/>
            <person name="Wood W.I."/>
            <person name="Godowski P.J."/>
            <person name="Gray A.M."/>
        </authorList>
    </citation>
    <scope>NUCLEOTIDE SEQUENCE [LARGE SCALE MRNA] (ISOFORM 1)</scope>
</reference>
<reference key="6">
    <citation type="journal article" date="2004" name="Genome Res.">
        <title>The status, quality, and expansion of the NIH full-length cDNA project: the Mammalian Gene Collection (MGC).</title>
        <authorList>
            <consortium name="The MGC Project Team"/>
        </authorList>
    </citation>
    <scope>NUCLEOTIDE SEQUENCE [LARGE SCALE MRNA] (ISOFORM 1)</scope>
</reference>
<keyword id="KW-0025">Alternative splicing</keyword>
<keyword id="KW-1003">Cell membrane</keyword>
<keyword id="KW-1015">Disulfide bond</keyword>
<keyword id="KW-0325">Glycoprotein</keyword>
<keyword id="KW-0336">GPI-anchor</keyword>
<keyword id="KW-0378">Hydrolase</keyword>
<keyword id="KW-0449">Lipoprotein</keyword>
<keyword id="KW-0472">Membrane</keyword>
<keyword id="KW-0645">Protease</keyword>
<keyword id="KW-1267">Proteomics identification</keyword>
<keyword id="KW-1185">Reference proteome</keyword>
<keyword id="KW-0720">Serine protease</keyword>
<keyword id="KW-0732">Signal</keyword>
<keyword id="KW-0865">Zymogen</keyword>
<sequence>MGARGALLLALLLARAGLRKPESQEAAPLSGPCGRRVITSRIVGGEDAELGRWPWQGSLRLWDSHVCGVSLLSHRWALTAAHCFETYSDLSDPSGWMVQFGQLTSMPSFWSLQAYYTRYFVSNIYLSPRYLGNSPYDIALVKLSAPVTYTKHIQPICLQASTFEFENRTDCWVTGWGYIKEDEALPSPHTLQEVQVAIINNSMCNHLFLKYSFRKDIFGDMVCAGNAQGGKDACFGDSGGPLACNKNGLWYQIGVVSWGVGCGRPNRPGVYTNISHHFEWIQKLMAQSGMSQPDPSWPLLFFPLLWALPLLGPV</sequence>
<organism>
    <name type="scientific">Homo sapiens</name>
    <name type="common">Human</name>
    <dbReference type="NCBI Taxonomy" id="9606"/>
    <lineage>
        <taxon>Eukaryota</taxon>
        <taxon>Metazoa</taxon>
        <taxon>Chordata</taxon>
        <taxon>Craniata</taxon>
        <taxon>Vertebrata</taxon>
        <taxon>Euteleostomi</taxon>
        <taxon>Mammalia</taxon>
        <taxon>Eutheria</taxon>
        <taxon>Euarchontoglires</taxon>
        <taxon>Primates</taxon>
        <taxon>Haplorrhini</taxon>
        <taxon>Catarrhini</taxon>
        <taxon>Hominidae</taxon>
        <taxon>Homo</taxon>
    </lineage>
</organism>